<protein>
    <recommendedName>
        <fullName evidence="1">Phosphatidylglycerol--prolipoprotein diacylglyceryl transferase</fullName>
        <ecNumber evidence="1">2.5.1.145</ecNumber>
    </recommendedName>
</protein>
<comment type="function">
    <text evidence="1">Catalyzes the transfer of the diacylglyceryl group from phosphatidylglycerol to the sulfhydryl group of the N-terminal cysteine of a prolipoprotein, the first step in the formation of mature lipoproteins.</text>
</comment>
<comment type="catalytic activity">
    <reaction evidence="1">
        <text>L-cysteinyl-[prolipoprotein] + a 1,2-diacyl-sn-glycero-3-phospho-(1'-sn-glycerol) = an S-1,2-diacyl-sn-glyceryl-L-cysteinyl-[prolipoprotein] + sn-glycerol 1-phosphate + H(+)</text>
        <dbReference type="Rhea" id="RHEA:56712"/>
        <dbReference type="Rhea" id="RHEA-COMP:14679"/>
        <dbReference type="Rhea" id="RHEA-COMP:14680"/>
        <dbReference type="ChEBI" id="CHEBI:15378"/>
        <dbReference type="ChEBI" id="CHEBI:29950"/>
        <dbReference type="ChEBI" id="CHEBI:57685"/>
        <dbReference type="ChEBI" id="CHEBI:64716"/>
        <dbReference type="ChEBI" id="CHEBI:140658"/>
        <dbReference type="EC" id="2.5.1.145"/>
    </reaction>
</comment>
<comment type="pathway">
    <text evidence="1">Protein modification; lipoprotein biosynthesis (diacylglyceryl transfer).</text>
</comment>
<comment type="subcellular location">
    <subcellularLocation>
        <location evidence="1">Cell membrane</location>
        <topology evidence="1">Multi-pass membrane protein</topology>
    </subcellularLocation>
</comment>
<comment type="similarity">
    <text evidence="1">Belongs to the Lgt family.</text>
</comment>
<feature type="chain" id="PRO_1000053503" description="Phosphatidylglycerol--prolipoprotein diacylglyceryl transferase">
    <location>
        <begin position="1"/>
        <end position="279"/>
    </location>
</feature>
<feature type="transmembrane region" description="Helical" evidence="1">
    <location>
        <begin position="18"/>
        <end position="38"/>
    </location>
</feature>
<feature type="transmembrane region" description="Helical" evidence="1">
    <location>
        <begin position="55"/>
        <end position="75"/>
    </location>
</feature>
<feature type="transmembrane region" description="Helical" evidence="1">
    <location>
        <begin position="89"/>
        <end position="109"/>
    </location>
</feature>
<feature type="transmembrane region" description="Helical" evidence="1">
    <location>
        <begin position="203"/>
        <end position="223"/>
    </location>
</feature>
<feature type="transmembrane region" description="Helical" evidence="1">
    <location>
        <begin position="235"/>
        <end position="255"/>
    </location>
</feature>
<feature type="binding site" evidence="1">
    <location>
        <position position="137"/>
    </location>
    <ligand>
        <name>a 1,2-diacyl-sn-glycero-3-phospho-(1'-sn-glycerol)</name>
        <dbReference type="ChEBI" id="CHEBI:64716"/>
    </ligand>
</feature>
<name>LGT_STAA1</name>
<sequence>MGIVFNYIDPVAFNLGPLSVRWYGIIIAVGILLGYFVAQRALVKAGLHKDTLVDIIFYSALFGFIAARIYFVIFQWPYYAENPSEIIKIWHGGIAIHGGLIGGFIAGVIVCKVKNLNPFQIGDIVAPSIILAQGIGRWGNFMNHEAHGGPVSRAFLEQLHLPNFIIENMYINGQYYHPTFLYESIWDVAGFIILVNIRKHLKLGETFFLYLTWYSIGRFFIEGLRTDSLMLTSNIRVAQLVSILLILISISLIVYRRIKYNPPLYSKVGALPWPTKKVK</sequence>
<reference key="1">
    <citation type="journal article" date="2008" name="Antimicrob. Agents Chemother.">
        <title>Mutated response regulator graR is responsible for phenotypic conversion of Staphylococcus aureus from heterogeneous vancomycin-intermediate resistance to vancomycin-intermediate resistance.</title>
        <authorList>
            <person name="Neoh H.-M."/>
            <person name="Cui L."/>
            <person name="Yuzawa H."/>
            <person name="Takeuchi F."/>
            <person name="Matsuo M."/>
            <person name="Hiramatsu K."/>
        </authorList>
    </citation>
    <scope>NUCLEOTIDE SEQUENCE [LARGE SCALE GENOMIC DNA]</scope>
    <source>
        <strain>Mu3 / ATCC 700698</strain>
    </source>
</reference>
<accession>A7WZQ9</accession>
<evidence type="ECO:0000255" key="1">
    <source>
        <dbReference type="HAMAP-Rule" id="MF_01147"/>
    </source>
</evidence>
<proteinExistence type="inferred from homology"/>
<keyword id="KW-1003">Cell membrane</keyword>
<keyword id="KW-0472">Membrane</keyword>
<keyword id="KW-0808">Transferase</keyword>
<keyword id="KW-0812">Transmembrane</keyword>
<keyword id="KW-1133">Transmembrane helix</keyword>
<dbReference type="EC" id="2.5.1.145" evidence="1"/>
<dbReference type="EMBL" id="AP009324">
    <property type="protein sequence ID" value="BAF77641.1"/>
    <property type="molecule type" value="Genomic_DNA"/>
</dbReference>
<dbReference type="RefSeq" id="WP_000513305.1">
    <property type="nucleotide sequence ID" value="NC_009782.1"/>
</dbReference>
<dbReference type="SMR" id="A7WZQ9"/>
<dbReference type="KEGG" id="saw:SAHV_0758"/>
<dbReference type="HOGENOM" id="CLU_013386_0_1_9"/>
<dbReference type="UniPathway" id="UPA00664"/>
<dbReference type="GO" id="GO:0005886">
    <property type="term" value="C:plasma membrane"/>
    <property type="evidence" value="ECO:0007669"/>
    <property type="project" value="UniProtKB-SubCell"/>
</dbReference>
<dbReference type="GO" id="GO:0008961">
    <property type="term" value="F:phosphatidylglycerol-prolipoprotein diacylglyceryl transferase activity"/>
    <property type="evidence" value="ECO:0007669"/>
    <property type="project" value="UniProtKB-UniRule"/>
</dbReference>
<dbReference type="GO" id="GO:0042158">
    <property type="term" value="P:lipoprotein biosynthetic process"/>
    <property type="evidence" value="ECO:0007669"/>
    <property type="project" value="UniProtKB-UniRule"/>
</dbReference>
<dbReference type="HAMAP" id="MF_01147">
    <property type="entry name" value="Lgt"/>
    <property type="match status" value="1"/>
</dbReference>
<dbReference type="InterPro" id="IPR001640">
    <property type="entry name" value="Lgt"/>
</dbReference>
<dbReference type="NCBIfam" id="TIGR00544">
    <property type="entry name" value="lgt"/>
    <property type="match status" value="1"/>
</dbReference>
<dbReference type="PANTHER" id="PTHR30589:SF0">
    <property type="entry name" value="PHOSPHATIDYLGLYCEROL--PROLIPOPROTEIN DIACYLGLYCERYL TRANSFERASE"/>
    <property type="match status" value="1"/>
</dbReference>
<dbReference type="PANTHER" id="PTHR30589">
    <property type="entry name" value="PROLIPOPROTEIN DIACYLGLYCERYL TRANSFERASE"/>
    <property type="match status" value="1"/>
</dbReference>
<dbReference type="Pfam" id="PF01790">
    <property type="entry name" value="LGT"/>
    <property type="match status" value="1"/>
</dbReference>
<dbReference type="PROSITE" id="PS01311">
    <property type="entry name" value="LGT"/>
    <property type="match status" value="1"/>
</dbReference>
<gene>
    <name evidence="1" type="primary">lgt</name>
    <name type="ordered locus">SAHV_0758</name>
</gene>
<organism>
    <name type="scientific">Staphylococcus aureus (strain Mu3 / ATCC 700698)</name>
    <dbReference type="NCBI Taxonomy" id="418127"/>
    <lineage>
        <taxon>Bacteria</taxon>
        <taxon>Bacillati</taxon>
        <taxon>Bacillota</taxon>
        <taxon>Bacilli</taxon>
        <taxon>Bacillales</taxon>
        <taxon>Staphylococcaceae</taxon>
        <taxon>Staphylococcus</taxon>
    </lineage>
</organism>